<name>HUTH_SALA4</name>
<protein>
    <recommendedName>
        <fullName evidence="1">Histidine ammonia-lyase</fullName>
        <shortName evidence="1">Histidase</shortName>
        <ecNumber evidence="1">4.3.1.3</ecNumber>
    </recommendedName>
</protein>
<keyword id="KW-0963">Cytoplasm</keyword>
<keyword id="KW-0369">Histidine metabolism</keyword>
<keyword id="KW-0456">Lyase</keyword>
<dbReference type="EC" id="4.3.1.3" evidence="1"/>
<dbReference type="EMBL" id="CP001138">
    <property type="protein sequence ID" value="ACH53012.1"/>
    <property type="molecule type" value="Genomic_DNA"/>
</dbReference>
<dbReference type="RefSeq" id="WP_001095229.1">
    <property type="nucleotide sequence ID" value="NC_011149.1"/>
</dbReference>
<dbReference type="SMR" id="B5F069"/>
<dbReference type="KEGG" id="sea:SeAg_B0827"/>
<dbReference type="HOGENOM" id="CLU_014801_4_0_6"/>
<dbReference type="UniPathway" id="UPA00379">
    <property type="reaction ID" value="UER00549"/>
</dbReference>
<dbReference type="Proteomes" id="UP000008819">
    <property type="component" value="Chromosome"/>
</dbReference>
<dbReference type="GO" id="GO:0005737">
    <property type="term" value="C:cytoplasm"/>
    <property type="evidence" value="ECO:0007669"/>
    <property type="project" value="UniProtKB-SubCell"/>
</dbReference>
<dbReference type="GO" id="GO:0004397">
    <property type="term" value="F:histidine ammonia-lyase activity"/>
    <property type="evidence" value="ECO:0007669"/>
    <property type="project" value="UniProtKB-UniRule"/>
</dbReference>
<dbReference type="GO" id="GO:0019556">
    <property type="term" value="P:L-histidine catabolic process to glutamate and formamide"/>
    <property type="evidence" value="ECO:0007669"/>
    <property type="project" value="UniProtKB-UniPathway"/>
</dbReference>
<dbReference type="GO" id="GO:0019557">
    <property type="term" value="P:L-histidine catabolic process to glutamate and formate"/>
    <property type="evidence" value="ECO:0007669"/>
    <property type="project" value="UniProtKB-UniPathway"/>
</dbReference>
<dbReference type="CDD" id="cd00332">
    <property type="entry name" value="PAL-HAL"/>
    <property type="match status" value="1"/>
</dbReference>
<dbReference type="FunFam" id="1.10.275.10:FF:000005">
    <property type="entry name" value="Histidine ammonia-lyase"/>
    <property type="match status" value="1"/>
</dbReference>
<dbReference type="FunFam" id="1.20.200.10:FF:000003">
    <property type="entry name" value="Histidine ammonia-lyase"/>
    <property type="match status" value="1"/>
</dbReference>
<dbReference type="Gene3D" id="1.20.200.10">
    <property type="entry name" value="Fumarase/aspartase (Central domain)"/>
    <property type="match status" value="1"/>
</dbReference>
<dbReference type="Gene3D" id="1.10.275.10">
    <property type="entry name" value="Fumarase/aspartase (N-terminal domain)"/>
    <property type="match status" value="1"/>
</dbReference>
<dbReference type="HAMAP" id="MF_00229">
    <property type="entry name" value="His_ammonia_lyase"/>
    <property type="match status" value="1"/>
</dbReference>
<dbReference type="InterPro" id="IPR001106">
    <property type="entry name" value="Aromatic_Lyase"/>
</dbReference>
<dbReference type="InterPro" id="IPR024083">
    <property type="entry name" value="Fumarase/histidase_N"/>
</dbReference>
<dbReference type="InterPro" id="IPR005921">
    <property type="entry name" value="HutH"/>
</dbReference>
<dbReference type="InterPro" id="IPR008948">
    <property type="entry name" value="L-Aspartase-like"/>
</dbReference>
<dbReference type="InterPro" id="IPR022313">
    <property type="entry name" value="Phe/His_NH3-lyase_AS"/>
</dbReference>
<dbReference type="NCBIfam" id="TIGR01225">
    <property type="entry name" value="hutH"/>
    <property type="match status" value="1"/>
</dbReference>
<dbReference type="NCBIfam" id="NF006871">
    <property type="entry name" value="PRK09367.1"/>
    <property type="match status" value="1"/>
</dbReference>
<dbReference type="PANTHER" id="PTHR10362">
    <property type="entry name" value="HISTIDINE AMMONIA-LYASE"/>
    <property type="match status" value="1"/>
</dbReference>
<dbReference type="Pfam" id="PF00221">
    <property type="entry name" value="Lyase_aromatic"/>
    <property type="match status" value="1"/>
</dbReference>
<dbReference type="SUPFAM" id="SSF48557">
    <property type="entry name" value="L-aspartase-like"/>
    <property type="match status" value="1"/>
</dbReference>
<dbReference type="PROSITE" id="PS00488">
    <property type="entry name" value="PAL_HISTIDASE"/>
    <property type="match status" value="1"/>
</dbReference>
<sequence>MNTMTLTPGQLSLSQLYDVWRHPVQLRLDANAIDGINASVACVNDIVAEGRTAYGINTGFGLLAQTRIADEDLQNLQRSLVLSHAAGVGDPLDDAMVRLIMVLKINSLARGFSGIRLSVIEALIALVNAGVYPLILAKGSVGASGDLAPLAHLSLTLLGEGKARWQGEWLPAQTALKKAGLEPVALAAKEGLALLNGTQASTAFALRGLFEAQELFASAVVCGALTTEAVLGSRRPFDARIHAARGQQGQIDVARLFRHLLTDTSAIAESHHHCHKVQDPYSLRCQPQVMGACLTQLRQTKEVLLAEANAVSDNPLVFADAGEVISGGNFHAEPVAMAADNLALAIAEIGALSERRIALMMDKHMSQLPPFLVKNGGVNSGFMIAQVTAAALASENKALAHPHSVDSLPTSANQEDHVSMAPAAGRRLWEMAANTRGIIAVEWLAACQGIDLREGLTSSPLLEQARQTLREQVAHYTQDRFFAPDIECATALLAQGALQRLVPDFM</sequence>
<gene>
    <name evidence="1" type="primary">hutH</name>
    <name type="ordered locus">SeAg_B0827</name>
</gene>
<evidence type="ECO:0000255" key="1">
    <source>
        <dbReference type="HAMAP-Rule" id="MF_00229"/>
    </source>
</evidence>
<organism>
    <name type="scientific">Salmonella agona (strain SL483)</name>
    <dbReference type="NCBI Taxonomy" id="454166"/>
    <lineage>
        <taxon>Bacteria</taxon>
        <taxon>Pseudomonadati</taxon>
        <taxon>Pseudomonadota</taxon>
        <taxon>Gammaproteobacteria</taxon>
        <taxon>Enterobacterales</taxon>
        <taxon>Enterobacteriaceae</taxon>
        <taxon>Salmonella</taxon>
    </lineage>
</organism>
<reference key="1">
    <citation type="journal article" date="2011" name="J. Bacteriol.">
        <title>Comparative genomics of 28 Salmonella enterica isolates: evidence for CRISPR-mediated adaptive sublineage evolution.</title>
        <authorList>
            <person name="Fricke W.F."/>
            <person name="Mammel M.K."/>
            <person name="McDermott P.F."/>
            <person name="Tartera C."/>
            <person name="White D.G."/>
            <person name="Leclerc J.E."/>
            <person name="Ravel J."/>
            <person name="Cebula T.A."/>
        </authorList>
    </citation>
    <scope>NUCLEOTIDE SEQUENCE [LARGE SCALE GENOMIC DNA]</scope>
    <source>
        <strain>SL483</strain>
    </source>
</reference>
<accession>B5F069</accession>
<feature type="chain" id="PRO_1000100446" description="Histidine ammonia-lyase">
    <location>
        <begin position="1"/>
        <end position="506"/>
    </location>
</feature>
<feature type="modified residue" description="2,3-didehydroalanine (Ser)" evidence="1">
    <location>
        <position position="144"/>
    </location>
</feature>
<feature type="cross-link" description="5-imidazolinone (Ala-Gly)" evidence="1">
    <location>
        <begin position="143"/>
        <end position="145"/>
    </location>
</feature>
<comment type="catalytic activity">
    <reaction evidence="1">
        <text>L-histidine = trans-urocanate + NH4(+)</text>
        <dbReference type="Rhea" id="RHEA:21232"/>
        <dbReference type="ChEBI" id="CHEBI:17771"/>
        <dbReference type="ChEBI" id="CHEBI:28938"/>
        <dbReference type="ChEBI" id="CHEBI:57595"/>
        <dbReference type="EC" id="4.3.1.3"/>
    </reaction>
</comment>
<comment type="pathway">
    <text evidence="1">Amino-acid degradation; L-histidine degradation into L-glutamate; N-formimidoyl-L-glutamate from L-histidine: step 1/3.</text>
</comment>
<comment type="subcellular location">
    <subcellularLocation>
        <location evidence="1">Cytoplasm</location>
    </subcellularLocation>
</comment>
<comment type="PTM">
    <text evidence="1">Contains an active site 4-methylidene-imidazol-5-one (MIO), which is formed autocatalytically by cyclization and dehydration of residues Ala-Ser-Gly.</text>
</comment>
<comment type="similarity">
    <text evidence="1">Belongs to the PAL/histidase family.</text>
</comment>
<proteinExistence type="inferred from homology"/>